<feature type="chain" id="PRO_0000177929" description="DNA mismatch repair protein MutL">
    <location>
        <begin position="1"/>
        <end position="623"/>
    </location>
</feature>
<feature type="region of interest" description="Disordered" evidence="2">
    <location>
        <begin position="353"/>
        <end position="389"/>
    </location>
</feature>
<feature type="compositionally biased region" description="Polar residues" evidence="2">
    <location>
        <begin position="353"/>
        <end position="368"/>
    </location>
</feature>
<dbReference type="EMBL" id="AE008918">
    <property type="protein sequence ID" value="AAL54268.1"/>
    <property type="molecule type" value="Genomic_DNA"/>
</dbReference>
<dbReference type="PIR" id="AI3637">
    <property type="entry name" value="AI3637"/>
</dbReference>
<dbReference type="RefSeq" id="WP_002966364.1">
    <property type="nucleotide sequence ID" value="NZ_GG703779.1"/>
</dbReference>
<dbReference type="SMR" id="P65489"/>
<dbReference type="GeneID" id="97535595"/>
<dbReference type="KEGG" id="bme:BMEII1026"/>
<dbReference type="KEGG" id="bmel:DK63_2230"/>
<dbReference type="PATRIC" id="fig|224914.52.peg.2336"/>
<dbReference type="eggNOG" id="COG0323">
    <property type="taxonomic scope" value="Bacteria"/>
</dbReference>
<dbReference type="Proteomes" id="UP000000419">
    <property type="component" value="Chromosome II"/>
</dbReference>
<dbReference type="GO" id="GO:0032300">
    <property type="term" value="C:mismatch repair complex"/>
    <property type="evidence" value="ECO:0007669"/>
    <property type="project" value="InterPro"/>
</dbReference>
<dbReference type="GO" id="GO:0005524">
    <property type="term" value="F:ATP binding"/>
    <property type="evidence" value="ECO:0007669"/>
    <property type="project" value="InterPro"/>
</dbReference>
<dbReference type="GO" id="GO:0016887">
    <property type="term" value="F:ATP hydrolysis activity"/>
    <property type="evidence" value="ECO:0007669"/>
    <property type="project" value="InterPro"/>
</dbReference>
<dbReference type="GO" id="GO:0140664">
    <property type="term" value="F:ATP-dependent DNA damage sensor activity"/>
    <property type="evidence" value="ECO:0007669"/>
    <property type="project" value="InterPro"/>
</dbReference>
<dbReference type="GO" id="GO:0030983">
    <property type="term" value="F:mismatched DNA binding"/>
    <property type="evidence" value="ECO:0007669"/>
    <property type="project" value="InterPro"/>
</dbReference>
<dbReference type="GO" id="GO:0006298">
    <property type="term" value="P:mismatch repair"/>
    <property type="evidence" value="ECO:0007669"/>
    <property type="project" value="UniProtKB-UniRule"/>
</dbReference>
<dbReference type="CDD" id="cd16926">
    <property type="entry name" value="HATPase_MutL-MLH-PMS-like"/>
    <property type="match status" value="1"/>
</dbReference>
<dbReference type="CDD" id="cd00782">
    <property type="entry name" value="MutL_Trans"/>
    <property type="match status" value="1"/>
</dbReference>
<dbReference type="FunFam" id="3.30.565.10:FF:000003">
    <property type="entry name" value="DNA mismatch repair endonuclease MutL"/>
    <property type="match status" value="1"/>
</dbReference>
<dbReference type="Gene3D" id="3.30.230.10">
    <property type="match status" value="1"/>
</dbReference>
<dbReference type="Gene3D" id="3.30.565.10">
    <property type="entry name" value="Histidine kinase-like ATPase, C-terminal domain"/>
    <property type="match status" value="1"/>
</dbReference>
<dbReference type="Gene3D" id="3.30.1540.20">
    <property type="entry name" value="MutL, C-terminal domain, dimerisation subdomain"/>
    <property type="match status" value="1"/>
</dbReference>
<dbReference type="Gene3D" id="3.30.1370.100">
    <property type="entry name" value="MutL, C-terminal domain, regulatory subdomain"/>
    <property type="match status" value="1"/>
</dbReference>
<dbReference type="HAMAP" id="MF_00149">
    <property type="entry name" value="DNA_mis_repair"/>
    <property type="match status" value="1"/>
</dbReference>
<dbReference type="InterPro" id="IPR014762">
    <property type="entry name" value="DNA_mismatch_repair_CS"/>
</dbReference>
<dbReference type="InterPro" id="IPR020667">
    <property type="entry name" value="DNA_mismatch_repair_MutL"/>
</dbReference>
<dbReference type="InterPro" id="IPR013507">
    <property type="entry name" value="DNA_mismatch_S5_2-like"/>
</dbReference>
<dbReference type="InterPro" id="IPR036890">
    <property type="entry name" value="HATPase_C_sf"/>
</dbReference>
<dbReference type="InterPro" id="IPR002099">
    <property type="entry name" value="MutL/Mlh/PMS"/>
</dbReference>
<dbReference type="InterPro" id="IPR038973">
    <property type="entry name" value="MutL/Mlh/Pms-like"/>
</dbReference>
<dbReference type="InterPro" id="IPR014790">
    <property type="entry name" value="MutL_C"/>
</dbReference>
<dbReference type="InterPro" id="IPR042120">
    <property type="entry name" value="MutL_C_dimsub"/>
</dbReference>
<dbReference type="InterPro" id="IPR042121">
    <property type="entry name" value="MutL_C_regsub"/>
</dbReference>
<dbReference type="InterPro" id="IPR037198">
    <property type="entry name" value="MutL_C_sf"/>
</dbReference>
<dbReference type="InterPro" id="IPR020568">
    <property type="entry name" value="Ribosomal_Su5_D2-typ_SF"/>
</dbReference>
<dbReference type="InterPro" id="IPR014721">
    <property type="entry name" value="Ribsml_uS5_D2-typ_fold_subgr"/>
</dbReference>
<dbReference type="NCBIfam" id="TIGR00585">
    <property type="entry name" value="mutl"/>
    <property type="match status" value="1"/>
</dbReference>
<dbReference type="NCBIfam" id="NF000953">
    <property type="entry name" value="PRK00095.2-4"/>
    <property type="match status" value="1"/>
</dbReference>
<dbReference type="PANTHER" id="PTHR10073">
    <property type="entry name" value="DNA MISMATCH REPAIR PROTEIN MLH, PMS, MUTL"/>
    <property type="match status" value="1"/>
</dbReference>
<dbReference type="PANTHER" id="PTHR10073:SF12">
    <property type="entry name" value="DNA MISMATCH REPAIR PROTEIN MLH1"/>
    <property type="match status" value="1"/>
</dbReference>
<dbReference type="Pfam" id="PF01119">
    <property type="entry name" value="DNA_mis_repair"/>
    <property type="match status" value="1"/>
</dbReference>
<dbReference type="Pfam" id="PF13589">
    <property type="entry name" value="HATPase_c_3"/>
    <property type="match status" value="1"/>
</dbReference>
<dbReference type="Pfam" id="PF08676">
    <property type="entry name" value="MutL_C"/>
    <property type="match status" value="1"/>
</dbReference>
<dbReference type="SMART" id="SM01340">
    <property type="entry name" value="DNA_mis_repair"/>
    <property type="match status" value="1"/>
</dbReference>
<dbReference type="SMART" id="SM00853">
    <property type="entry name" value="MutL_C"/>
    <property type="match status" value="1"/>
</dbReference>
<dbReference type="SUPFAM" id="SSF55874">
    <property type="entry name" value="ATPase domain of HSP90 chaperone/DNA topoisomerase II/histidine kinase"/>
    <property type="match status" value="1"/>
</dbReference>
<dbReference type="SUPFAM" id="SSF118116">
    <property type="entry name" value="DNA mismatch repair protein MutL"/>
    <property type="match status" value="1"/>
</dbReference>
<dbReference type="SUPFAM" id="SSF54211">
    <property type="entry name" value="Ribosomal protein S5 domain 2-like"/>
    <property type="match status" value="1"/>
</dbReference>
<dbReference type="PROSITE" id="PS00058">
    <property type="entry name" value="DNA_MISMATCH_REPAIR_1"/>
    <property type="match status" value="1"/>
</dbReference>
<protein>
    <recommendedName>
        <fullName evidence="1">DNA mismatch repair protein MutL</fullName>
    </recommendedName>
</protein>
<name>MUTL_BRUME</name>
<organism>
    <name type="scientific">Brucella melitensis biotype 1 (strain ATCC 23456 / CCUG 17765 / NCTC 10094 / 16M)</name>
    <dbReference type="NCBI Taxonomy" id="224914"/>
    <lineage>
        <taxon>Bacteria</taxon>
        <taxon>Pseudomonadati</taxon>
        <taxon>Pseudomonadota</taxon>
        <taxon>Alphaproteobacteria</taxon>
        <taxon>Hyphomicrobiales</taxon>
        <taxon>Brucellaceae</taxon>
        <taxon>Brucella/Ochrobactrum group</taxon>
        <taxon>Brucella</taxon>
    </lineage>
</organism>
<sequence length="623" mass="66783">MTIRHLSETIINQIAAGEVIERPASVIKELVENAIDAGATRIEVVTAGGGKTLLRVTDNGSGIPADELALAVSRHCTSKLTDDVHDIRALGFRGEALPSIGSVSKLTLKSRPQDADSGFEVCVTGGHLDGPRPTALNRGTIVEVRDLFYATPARLKFMKTDRAEATAITDVVKRIGIAFPHIRFSLAGTDRTPFEMPATGTGAEATLERIGQVLGREFGENALAIDAERDGVRLAGFVGIPSFNRGNALHQFAYVNGRPVRDKQIFGALRGAYSDVIARDRHPVAVLFLTLDPALVDVNVHPAKADVRFRDPGLVRGLIVGAIKQALAQSGIRPATSGAEAMLQAFRAEGFGAQQSAPRPANSYSPASWRTAPPAPRSEWSPQTAHPAHRPLDLQAAPALRENGQAVLGDVAVPAADARASVAEAPVELMQKPLGAARAQIHENYIVAQTEDSLVIVDQHAAHERLVYEALKNALHARPIAGQMLLIPEIVDLPEEDAQRLAGHAETLARFGLGVEQFGPGAIAVRETPAMLGEMNVQQLIRDLADEIAEHDTADGLKAMLHHVAATMACHGSVRSGRRLKPEEMNALLRDMEATPGSGTCNHGRPTYIELKLTDIERLFGRR</sequence>
<comment type="function">
    <text evidence="1">This protein is involved in the repair of mismatches in DNA. It is required for dam-dependent methyl-directed DNA mismatch repair. May act as a 'molecular matchmaker', a protein that promotes the formation of a stable complex between two or more DNA-binding proteins in an ATP-dependent manner without itself being part of a final effector complex.</text>
</comment>
<comment type="similarity">
    <text evidence="1">Belongs to the DNA mismatch repair MutL/HexB family.</text>
</comment>
<keyword id="KW-0227">DNA damage</keyword>
<keyword id="KW-0234">DNA repair</keyword>
<accession>P65489</accession>
<accession>Q8YB74</accession>
<proteinExistence type="inferred from homology"/>
<gene>
    <name evidence="1" type="primary">mutL</name>
    <name type="ordered locus">BMEII1026</name>
</gene>
<evidence type="ECO:0000255" key="1">
    <source>
        <dbReference type="HAMAP-Rule" id="MF_00149"/>
    </source>
</evidence>
<evidence type="ECO:0000256" key="2">
    <source>
        <dbReference type="SAM" id="MobiDB-lite"/>
    </source>
</evidence>
<reference key="1">
    <citation type="journal article" date="2002" name="Proc. Natl. Acad. Sci. U.S.A.">
        <title>The genome sequence of the facultative intracellular pathogen Brucella melitensis.</title>
        <authorList>
            <person name="DelVecchio V.G."/>
            <person name="Kapatral V."/>
            <person name="Redkar R.J."/>
            <person name="Patra G."/>
            <person name="Mujer C."/>
            <person name="Los T."/>
            <person name="Ivanova N."/>
            <person name="Anderson I."/>
            <person name="Bhattacharyya A."/>
            <person name="Lykidis A."/>
            <person name="Reznik G."/>
            <person name="Jablonski L."/>
            <person name="Larsen N."/>
            <person name="D'Souza M."/>
            <person name="Bernal A."/>
            <person name="Mazur M."/>
            <person name="Goltsman E."/>
            <person name="Selkov E."/>
            <person name="Elzer P.H."/>
            <person name="Hagius S."/>
            <person name="O'Callaghan D."/>
            <person name="Letesson J.-J."/>
            <person name="Haselkorn R."/>
            <person name="Kyrpides N.C."/>
            <person name="Overbeek R."/>
        </authorList>
    </citation>
    <scope>NUCLEOTIDE SEQUENCE [LARGE SCALE GENOMIC DNA]</scope>
    <source>
        <strain>ATCC 23456 / CCUG 17765 / NCTC 10094 / 16M</strain>
    </source>
</reference>